<dbReference type="EC" id="7.2.2.6" evidence="1"/>
<dbReference type="EMBL" id="CP001616">
    <property type="protein sequence ID" value="ACQ92813.1"/>
    <property type="molecule type" value="Genomic_DNA"/>
</dbReference>
<dbReference type="RefSeq" id="WP_012729412.1">
    <property type="nucleotide sequence ID" value="NC_012691.1"/>
</dbReference>
<dbReference type="SMR" id="C4LDL7"/>
<dbReference type="STRING" id="595494.Tola_1193"/>
<dbReference type="KEGG" id="tau:Tola_1193"/>
<dbReference type="eggNOG" id="COG2216">
    <property type="taxonomic scope" value="Bacteria"/>
</dbReference>
<dbReference type="HOGENOM" id="CLU_025728_2_0_6"/>
<dbReference type="OrthoDB" id="9814270at2"/>
<dbReference type="Proteomes" id="UP000009073">
    <property type="component" value="Chromosome"/>
</dbReference>
<dbReference type="GO" id="GO:0005886">
    <property type="term" value="C:plasma membrane"/>
    <property type="evidence" value="ECO:0007669"/>
    <property type="project" value="UniProtKB-SubCell"/>
</dbReference>
<dbReference type="GO" id="GO:0005524">
    <property type="term" value="F:ATP binding"/>
    <property type="evidence" value="ECO:0007669"/>
    <property type="project" value="UniProtKB-UniRule"/>
</dbReference>
<dbReference type="GO" id="GO:0016887">
    <property type="term" value="F:ATP hydrolysis activity"/>
    <property type="evidence" value="ECO:0007669"/>
    <property type="project" value="InterPro"/>
</dbReference>
<dbReference type="GO" id="GO:0000287">
    <property type="term" value="F:magnesium ion binding"/>
    <property type="evidence" value="ECO:0007669"/>
    <property type="project" value="UniProtKB-UniRule"/>
</dbReference>
<dbReference type="GO" id="GO:0008556">
    <property type="term" value="F:P-type potassium transmembrane transporter activity"/>
    <property type="evidence" value="ECO:0007669"/>
    <property type="project" value="UniProtKB-UniRule"/>
</dbReference>
<dbReference type="CDD" id="cd02078">
    <property type="entry name" value="P-type_ATPase_K"/>
    <property type="match status" value="1"/>
</dbReference>
<dbReference type="FunFam" id="2.70.150.10:FF:000010">
    <property type="entry name" value="Potassium-transporting ATPase ATP-binding subunit"/>
    <property type="match status" value="1"/>
</dbReference>
<dbReference type="FunFam" id="3.40.1110.10:FF:000007">
    <property type="entry name" value="Potassium-transporting ATPase ATP-binding subunit"/>
    <property type="match status" value="1"/>
</dbReference>
<dbReference type="Gene3D" id="3.40.1110.10">
    <property type="entry name" value="Calcium-transporting ATPase, cytoplasmic domain N"/>
    <property type="match status" value="1"/>
</dbReference>
<dbReference type="Gene3D" id="2.70.150.10">
    <property type="entry name" value="Calcium-transporting ATPase, cytoplasmic transduction domain A"/>
    <property type="match status" value="1"/>
</dbReference>
<dbReference type="Gene3D" id="3.40.50.1000">
    <property type="entry name" value="HAD superfamily/HAD-like"/>
    <property type="match status" value="1"/>
</dbReference>
<dbReference type="HAMAP" id="MF_00285">
    <property type="entry name" value="KdpB"/>
    <property type="match status" value="1"/>
</dbReference>
<dbReference type="InterPro" id="IPR023299">
    <property type="entry name" value="ATPase_P-typ_cyto_dom_N"/>
</dbReference>
<dbReference type="InterPro" id="IPR018303">
    <property type="entry name" value="ATPase_P-typ_P_site"/>
</dbReference>
<dbReference type="InterPro" id="IPR023298">
    <property type="entry name" value="ATPase_P-typ_TM_dom_sf"/>
</dbReference>
<dbReference type="InterPro" id="IPR008250">
    <property type="entry name" value="ATPase_P-typ_transduc_dom_A_sf"/>
</dbReference>
<dbReference type="InterPro" id="IPR036412">
    <property type="entry name" value="HAD-like_sf"/>
</dbReference>
<dbReference type="InterPro" id="IPR023214">
    <property type="entry name" value="HAD_sf"/>
</dbReference>
<dbReference type="InterPro" id="IPR006391">
    <property type="entry name" value="P-type_ATPase_bsu_IA"/>
</dbReference>
<dbReference type="InterPro" id="IPR001757">
    <property type="entry name" value="P_typ_ATPase"/>
</dbReference>
<dbReference type="InterPro" id="IPR044492">
    <property type="entry name" value="P_typ_ATPase_HD_dom"/>
</dbReference>
<dbReference type="NCBIfam" id="TIGR01494">
    <property type="entry name" value="ATPase_P-type"/>
    <property type="match status" value="2"/>
</dbReference>
<dbReference type="NCBIfam" id="TIGR01497">
    <property type="entry name" value="kdpB"/>
    <property type="match status" value="1"/>
</dbReference>
<dbReference type="PANTHER" id="PTHR43743">
    <property type="entry name" value="POTASSIUM-TRANSPORTING ATPASE ATP-BINDING SUBUNIT"/>
    <property type="match status" value="1"/>
</dbReference>
<dbReference type="PANTHER" id="PTHR43743:SF1">
    <property type="entry name" value="POTASSIUM-TRANSPORTING ATPASE ATP-BINDING SUBUNIT"/>
    <property type="match status" value="1"/>
</dbReference>
<dbReference type="Pfam" id="PF00122">
    <property type="entry name" value="E1-E2_ATPase"/>
    <property type="match status" value="1"/>
</dbReference>
<dbReference type="Pfam" id="PF00702">
    <property type="entry name" value="Hydrolase"/>
    <property type="match status" value="1"/>
</dbReference>
<dbReference type="PRINTS" id="PR00119">
    <property type="entry name" value="CATATPASE"/>
</dbReference>
<dbReference type="SFLD" id="SFLDS00003">
    <property type="entry name" value="Haloacid_Dehalogenase"/>
    <property type="match status" value="1"/>
</dbReference>
<dbReference type="SFLD" id="SFLDF00027">
    <property type="entry name" value="p-type_atpase"/>
    <property type="match status" value="1"/>
</dbReference>
<dbReference type="SUPFAM" id="SSF81653">
    <property type="entry name" value="Calcium ATPase, transduction domain A"/>
    <property type="match status" value="1"/>
</dbReference>
<dbReference type="SUPFAM" id="SSF81665">
    <property type="entry name" value="Calcium ATPase, transmembrane domain M"/>
    <property type="match status" value="1"/>
</dbReference>
<dbReference type="SUPFAM" id="SSF56784">
    <property type="entry name" value="HAD-like"/>
    <property type="match status" value="1"/>
</dbReference>
<dbReference type="PROSITE" id="PS00154">
    <property type="entry name" value="ATPASE_E1_E2"/>
    <property type="match status" value="1"/>
</dbReference>
<protein>
    <recommendedName>
        <fullName evidence="1">Potassium-transporting ATPase ATP-binding subunit</fullName>
        <ecNumber evidence="1">7.2.2.6</ecNumber>
    </recommendedName>
    <alternativeName>
        <fullName evidence="1">ATP phosphohydrolase [potassium-transporting] B chain</fullName>
    </alternativeName>
    <alternativeName>
        <fullName evidence="1">Potassium-binding and translocating subunit B</fullName>
    </alternativeName>
    <alternativeName>
        <fullName evidence="1">Potassium-translocating ATPase B chain</fullName>
    </alternativeName>
</protein>
<proteinExistence type="inferred from homology"/>
<name>KDPB_TOLAT</name>
<gene>
    <name evidence="1" type="primary">kdpB</name>
    <name type="ordered locus">Tola_1193</name>
</gene>
<evidence type="ECO:0000255" key="1">
    <source>
        <dbReference type="HAMAP-Rule" id="MF_00285"/>
    </source>
</evidence>
<accession>C4LDL7</accession>
<organism>
    <name type="scientific">Tolumonas auensis (strain DSM 9187 / NBRC 110442 / TA 4)</name>
    <dbReference type="NCBI Taxonomy" id="595494"/>
    <lineage>
        <taxon>Bacteria</taxon>
        <taxon>Pseudomonadati</taxon>
        <taxon>Pseudomonadota</taxon>
        <taxon>Gammaproteobacteria</taxon>
        <taxon>Aeromonadales</taxon>
        <taxon>Aeromonadaceae</taxon>
        <taxon>Tolumonas</taxon>
    </lineage>
</organism>
<sequence length="688" mass="72902">MSRKQFTLFDPVLLKPALWSAVLKLDPRAQWHNPVMMVVWCCCVLLTIVCGVQFAGDSSSEAVFSLGVTAWLWFTLLFANLAEALAEGRSKAQAASLKGLKKTVVAHKLAAAEHDAVSQPVPADSLRKGDYVLVSAGEVIPYDGEVIEGVASVDESAITGESAPVIRESGGDFSAVTGGTRVLSDWLVIGCTVNPGETFLDRMISMVEGAKRRKTPNEIALSILLVALTLVFLLAVVTLMPFSQYSVNSMGHGEPISVTVLVALLVCLIPTTIGGLLSAIGVAGMSRMLAANVIATSGRAVEAAGDIDVLLLDKTGTITLGNRQAAAFLPAPGISEQELASAAQLASLADETPEGRSIVVLAKQRFNLREHDIHALGATFVPFSAQTRMSGVNIHDRMIRKGSVDALRRHVASNQGHFPPEVEKQVEDVAKTGGTPLVVSEGACVLGVVALKDIVKGGIKERFAELRRMGIKTVMITGDNRLTAAAIAAEAGVDDFLAEATPEAKLALIRQYQAEGRLVAMTGDGTNDAPALAQADVAVAMNSGTQAAKEAGNMVDLDSNPTKLIEVVHIGKQMLMTRGSLTTFSLANDLAKYFAILPAAFITTYPQLGALNLMHLSSPQSAILSAVIFNALIIIGLIPLALRGVHYQPRSAKSLLRRNLFFYGLGGVVLPFIGIKVIDLFLTLMGWI</sequence>
<reference key="1">
    <citation type="submission" date="2009-05" db="EMBL/GenBank/DDBJ databases">
        <title>Complete sequence of Tolumonas auensis DSM 9187.</title>
        <authorList>
            <consortium name="US DOE Joint Genome Institute"/>
            <person name="Lucas S."/>
            <person name="Copeland A."/>
            <person name="Lapidus A."/>
            <person name="Glavina del Rio T."/>
            <person name="Tice H."/>
            <person name="Bruce D."/>
            <person name="Goodwin L."/>
            <person name="Pitluck S."/>
            <person name="Chertkov O."/>
            <person name="Brettin T."/>
            <person name="Detter J.C."/>
            <person name="Han C."/>
            <person name="Larimer F."/>
            <person name="Land M."/>
            <person name="Hauser L."/>
            <person name="Kyrpides N."/>
            <person name="Mikhailova N."/>
            <person name="Spring S."/>
            <person name="Beller H."/>
        </authorList>
    </citation>
    <scope>NUCLEOTIDE SEQUENCE [LARGE SCALE GENOMIC DNA]</scope>
    <source>
        <strain>DSM 9187 / NBRC 110442 / TA 4</strain>
    </source>
</reference>
<keyword id="KW-0067">ATP-binding</keyword>
<keyword id="KW-0997">Cell inner membrane</keyword>
<keyword id="KW-1003">Cell membrane</keyword>
<keyword id="KW-0406">Ion transport</keyword>
<keyword id="KW-0460">Magnesium</keyword>
<keyword id="KW-0472">Membrane</keyword>
<keyword id="KW-0479">Metal-binding</keyword>
<keyword id="KW-0547">Nucleotide-binding</keyword>
<keyword id="KW-0597">Phosphoprotein</keyword>
<keyword id="KW-0630">Potassium</keyword>
<keyword id="KW-0633">Potassium transport</keyword>
<keyword id="KW-1185">Reference proteome</keyword>
<keyword id="KW-1278">Translocase</keyword>
<keyword id="KW-0812">Transmembrane</keyword>
<keyword id="KW-1133">Transmembrane helix</keyword>
<keyword id="KW-0813">Transport</keyword>
<feature type="chain" id="PRO_1000204852" description="Potassium-transporting ATPase ATP-binding subunit">
    <location>
        <begin position="1"/>
        <end position="688"/>
    </location>
</feature>
<feature type="transmembrane region" description="Helical" evidence="1">
    <location>
        <begin position="35"/>
        <end position="55"/>
    </location>
</feature>
<feature type="transmembrane region" description="Helical" evidence="1">
    <location>
        <begin position="62"/>
        <end position="82"/>
    </location>
</feature>
<feature type="transmembrane region" description="Helical" evidence="1">
    <location>
        <begin position="219"/>
        <end position="239"/>
    </location>
</feature>
<feature type="transmembrane region" description="Helical" evidence="1">
    <location>
        <begin position="260"/>
        <end position="280"/>
    </location>
</feature>
<feature type="transmembrane region" description="Helical" evidence="1">
    <location>
        <begin position="594"/>
        <end position="614"/>
    </location>
</feature>
<feature type="transmembrane region" description="Helical" evidence="1">
    <location>
        <begin position="622"/>
        <end position="642"/>
    </location>
</feature>
<feature type="transmembrane region" description="Helical" evidence="1">
    <location>
        <begin position="668"/>
        <end position="688"/>
    </location>
</feature>
<feature type="active site" description="4-aspartylphosphate intermediate" evidence="1">
    <location>
        <position position="313"/>
    </location>
</feature>
<feature type="binding site" evidence="1">
    <location>
        <position position="350"/>
    </location>
    <ligand>
        <name>ATP</name>
        <dbReference type="ChEBI" id="CHEBI:30616"/>
    </ligand>
</feature>
<feature type="binding site" evidence="1">
    <location>
        <position position="354"/>
    </location>
    <ligand>
        <name>ATP</name>
        <dbReference type="ChEBI" id="CHEBI:30616"/>
    </ligand>
</feature>
<feature type="binding site" evidence="1">
    <location>
        <begin position="383"/>
        <end position="390"/>
    </location>
    <ligand>
        <name>ATP</name>
        <dbReference type="ChEBI" id="CHEBI:30616"/>
    </ligand>
</feature>
<feature type="binding site" evidence="1">
    <location>
        <position position="401"/>
    </location>
    <ligand>
        <name>ATP</name>
        <dbReference type="ChEBI" id="CHEBI:30616"/>
    </ligand>
</feature>
<feature type="binding site" evidence="1">
    <location>
        <position position="524"/>
    </location>
    <ligand>
        <name>Mg(2+)</name>
        <dbReference type="ChEBI" id="CHEBI:18420"/>
    </ligand>
</feature>
<feature type="binding site" evidence="1">
    <location>
        <position position="528"/>
    </location>
    <ligand>
        <name>Mg(2+)</name>
        <dbReference type="ChEBI" id="CHEBI:18420"/>
    </ligand>
</feature>
<comment type="function">
    <text evidence="1">Part of the high-affinity ATP-driven potassium transport (or Kdp) system, which catalyzes the hydrolysis of ATP coupled with the electrogenic transport of potassium into the cytoplasm. This subunit is responsible for energy coupling to the transport system and for the release of the potassium ions to the cytoplasm.</text>
</comment>
<comment type="catalytic activity">
    <reaction evidence="1">
        <text>K(+)(out) + ATP + H2O = K(+)(in) + ADP + phosphate + H(+)</text>
        <dbReference type="Rhea" id="RHEA:16777"/>
        <dbReference type="ChEBI" id="CHEBI:15377"/>
        <dbReference type="ChEBI" id="CHEBI:15378"/>
        <dbReference type="ChEBI" id="CHEBI:29103"/>
        <dbReference type="ChEBI" id="CHEBI:30616"/>
        <dbReference type="ChEBI" id="CHEBI:43474"/>
        <dbReference type="ChEBI" id="CHEBI:456216"/>
        <dbReference type="EC" id="7.2.2.6"/>
    </reaction>
    <physiologicalReaction direction="left-to-right" evidence="1">
        <dbReference type="Rhea" id="RHEA:16778"/>
    </physiologicalReaction>
</comment>
<comment type="subunit">
    <text evidence="1">The system is composed of three essential subunits: KdpA, KdpB and KdpC.</text>
</comment>
<comment type="subcellular location">
    <subcellularLocation>
        <location evidence="1">Cell inner membrane</location>
        <topology evidence="1">Multi-pass membrane protein</topology>
    </subcellularLocation>
</comment>
<comment type="similarity">
    <text evidence="1">Belongs to the cation transport ATPase (P-type) (TC 3.A.3) family. Type IA subfamily.</text>
</comment>